<proteinExistence type="inferred from homology"/>
<reference key="1">
    <citation type="journal article" date="2009" name="Science">
        <title>The dynamics and time scale of ongoing genomic erosion in symbiotic bacteria.</title>
        <authorList>
            <person name="Moran N.A."/>
            <person name="McLaughlin H.J."/>
            <person name="Sorek R."/>
        </authorList>
    </citation>
    <scope>NUCLEOTIDE SEQUENCE [LARGE SCALE GENOMIC DNA]</scope>
    <source>
        <strain>Tuc7</strain>
    </source>
</reference>
<keyword id="KW-0028">Amino-acid biosynthesis</keyword>
<keyword id="KW-0057">Aromatic amino acid biosynthesis</keyword>
<keyword id="KW-0456">Lyase</keyword>
<dbReference type="EC" id="4.2.1.10" evidence="1"/>
<dbReference type="EMBL" id="CP001158">
    <property type="protein sequence ID" value="ACL30199.1"/>
    <property type="molecule type" value="Genomic_DNA"/>
</dbReference>
<dbReference type="RefSeq" id="WP_009874357.1">
    <property type="nucleotide sequence ID" value="NC_011834.1"/>
</dbReference>
<dbReference type="SMR" id="B8D7T4"/>
<dbReference type="KEGG" id="bau:BUAPTUC7_393"/>
<dbReference type="HOGENOM" id="CLU_090968_1_0_6"/>
<dbReference type="UniPathway" id="UPA00053">
    <property type="reaction ID" value="UER00086"/>
</dbReference>
<dbReference type="GO" id="GO:0003855">
    <property type="term" value="F:3-dehydroquinate dehydratase activity"/>
    <property type="evidence" value="ECO:0007669"/>
    <property type="project" value="UniProtKB-UniRule"/>
</dbReference>
<dbReference type="GO" id="GO:0008652">
    <property type="term" value="P:amino acid biosynthetic process"/>
    <property type="evidence" value="ECO:0007669"/>
    <property type="project" value="UniProtKB-KW"/>
</dbReference>
<dbReference type="GO" id="GO:0009073">
    <property type="term" value="P:aromatic amino acid family biosynthetic process"/>
    <property type="evidence" value="ECO:0007669"/>
    <property type="project" value="UniProtKB-KW"/>
</dbReference>
<dbReference type="GO" id="GO:0009423">
    <property type="term" value="P:chorismate biosynthetic process"/>
    <property type="evidence" value="ECO:0007669"/>
    <property type="project" value="UniProtKB-UniRule"/>
</dbReference>
<dbReference type="GO" id="GO:0019631">
    <property type="term" value="P:quinate catabolic process"/>
    <property type="evidence" value="ECO:0007669"/>
    <property type="project" value="TreeGrafter"/>
</dbReference>
<dbReference type="CDD" id="cd00466">
    <property type="entry name" value="DHQase_II"/>
    <property type="match status" value="1"/>
</dbReference>
<dbReference type="Gene3D" id="3.40.50.9100">
    <property type="entry name" value="Dehydroquinase, class II"/>
    <property type="match status" value="1"/>
</dbReference>
<dbReference type="HAMAP" id="MF_00169">
    <property type="entry name" value="AroQ"/>
    <property type="match status" value="1"/>
</dbReference>
<dbReference type="InterPro" id="IPR001874">
    <property type="entry name" value="DHquinase_II"/>
</dbReference>
<dbReference type="InterPro" id="IPR018509">
    <property type="entry name" value="DHquinase_II_CS"/>
</dbReference>
<dbReference type="InterPro" id="IPR036441">
    <property type="entry name" value="DHquinase_II_sf"/>
</dbReference>
<dbReference type="NCBIfam" id="TIGR01088">
    <property type="entry name" value="aroQ"/>
    <property type="match status" value="1"/>
</dbReference>
<dbReference type="NCBIfam" id="NF003804">
    <property type="entry name" value="PRK05395.1-1"/>
    <property type="match status" value="1"/>
</dbReference>
<dbReference type="NCBIfam" id="NF003805">
    <property type="entry name" value="PRK05395.1-2"/>
    <property type="match status" value="1"/>
</dbReference>
<dbReference type="NCBIfam" id="NF003806">
    <property type="entry name" value="PRK05395.1-3"/>
    <property type="match status" value="1"/>
</dbReference>
<dbReference type="NCBIfam" id="NF003807">
    <property type="entry name" value="PRK05395.1-4"/>
    <property type="match status" value="1"/>
</dbReference>
<dbReference type="PANTHER" id="PTHR21272">
    <property type="entry name" value="CATABOLIC 3-DEHYDROQUINASE"/>
    <property type="match status" value="1"/>
</dbReference>
<dbReference type="PANTHER" id="PTHR21272:SF3">
    <property type="entry name" value="CATABOLIC 3-DEHYDROQUINASE"/>
    <property type="match status" value="1"/>
</dbReference>
<dbReference type="Pfam" id="PF01220">
    <property type="entry name" value="DHquinase_II"/>
    <property type="match status" value="1"/>
</dbReference>
<dbReference type="PIRSF" id="PIRSF001399">
    <property type="entry name" value="DHquinase_II"/>
    <property type="match status" value="1"/>
</dbReference>
<dbReference type="SUPFAM" id="SSF52304">
    <property type="entry name" value="Type II 3-dehydroquinate dehydratase"/>
    <property type="match status" value="1"/>
</dbReference>
<dbReference type="PROSITE" id="PS01029">
    <property type="entry name" value="DEHYDROQUINASE_II"/>
    <property type="match status" value="1"/>
</dbReference>
<protein>
    <recommendedName>
        <fullName evidence="1">3-dehydroquinate dehydratase</fullName>
        <shortName evidence="1">3-dehydroquinase</shortName>
        <ecNumber evidence="1">4.2.1.10</ecNumber>
    </recommendedName>
    <alternativeName>
        <fullName evidence="1">Type II DHQase</fullName>
    </alternativeName>
</protein>
<feature type="chain" id="PRO_1000123685" description="3-dehydroquinate dehydratase">
    <location>
        <begin position="1"/>
        <end position="150"/>
    </location>
</feature>
<feature type="active site" description="Proton acceptor" evidence="1">
    <location>
        <position position="26"/>
    </location>
</feature>
<feature type="active site" description="Proton donor" evidence="1">
    <location>
        <position position="103"/>
    </location>
</feature>
<feature type="binding site" evidence="1">
    <location>
        <position position="77"/>
    </location>
    <ligand>
        <name>substrate</name>
    </ligand>
</feature>
<feature type="binding site" evidence="1">
    <location>
        <position position="83"/>
    </location>
    <ligand>
        <name>substrate</name>
    </ligand>
</feature>
<feature type="binding site" evidence="1">
    <location>
        <position position="90"/>
    </location>
    <ligand>
        <name>substrate</name>
    </ligand>
</feature>
<feature type="binding site" evidence="1">
    <location>
        <begin position="104"/>
        <end position="105"/>
    </location>
    <ligand>
        <name>substrate</name>
    </ligand>
</feature>
<feature type="binding site" evidence="1">
    <location>
        <position position="114"/>
    </location>
    <ligand>
        <name>substrate</name>
    </ligand>
</feature>
<feature type="site" description="Transition state stabilizer" evidence="1">
    <location>
        <position position="21"/>
    </location>
</feature>
<comment type="function">
    <text evidence="1">Catalyzes a trans-dehydration via an enolate intermediate.</text>
</comment>
<comment type="catalytic activity">
    <reaction evidence="1">
        <text>3-dehydroquinate = 3-dehydroshikimate + H2O</text>
        <dbReference type="Rhea" id="RHEA:21096"/>
        <dbReference type="ChEBI" id="CHEBI:15377"/>
        <dbReference type="ChEBI" id="CHEBI:16630"/>
        <dbReference type="ChEBI" id="CHEBI:32364"/>
        <dbReference type="EC" id="4.2.1.10"/>
    </reaction>
</comment>
<comment type="pathway">
    <text evidence="1">Metabolic intermediate biosynthesis; chorismate biosynthesis; chorismate from D-erythrose 4-phosphate and phosphoenolpyruvate: step 3/7.</text>
</comment>
<comment type="subunit">
    <text evidence="1">Homododecamer.</text>
</comment>
<comment type="similarity">
    <text evidence="1">Belongs to the type-II 3-dehydroquinase family.</text>
</comment>
<evidence type="ECO:0000255" key="1">
    <source>
        <dbReference type="HAMAP-Rule" id="MF_00169"/>
    </source>
</evidence>
<accession>B8D7T4</accession>
<gene>
    <name evidence="1" type="primary">aroQ</name>
    <name type="ordered locus">BUAPTUC7_393</name>
</gene>
<sequence length="150" mass="17058">MKNNINILLINGPNLNLLGTRETEIYGDITLPDLLKNLEKRAKKLNMSLKHIQSNAEHVLIDKIHSSRKNINYIIINPAAFTHTSIAIRDALIAVEIPFIEIHISNIYSREDFRSHSWLSDISQGVICGLGLDGYHWALETISNRLIHLK</sequence>
<organism>
    <name type="scientific">Buchnera aphidicola subsp. Acyrthosiphon pisum (strain Tuc7)</name>
    <dbReference type="NCBI Taxonomy" id="561501"/>
    <lineage>
        <taxon>Bacteria</taxon>
        <taxon>Pseudomonadati</taxon>
        <taxon>Pseudomonadota</taxon>
        <taxon>Gammaproteobacteria</taxon>
        <taxon>Enterobacterales</taxon>
        <taxon>Erwiniaceae</taxon>
        <taxon>Buchnera</taxon>
    </lineage>
</organism>
<name>AROQ_BUCAT</name>